<feature type="chain" id="PRO_0000049892" description="Stress response protein YsnF">
    <location>
        <begin position="1"/>
        <end position="273"/>
    </location>
</feature>
<feature type="region of interest" description="Disordered" evidence="1">
    <location>
        <begin position="241"/>
        <end position="273"/>
    </location>
</feature>
<feature type="compositionally biased region" description="Basic and acidic residues" evidence="1">
    <location>
        <begin position="241"/>
        <end position="264"/>
    </location>
</feature>
<evidence type="ECO:0000256" key="1">
    <source>
        <dbReference type="SAM" id="MobiDB-lite"/>
    </source>
</evidence>
<evidence type="ECO:0000269" key="2">
    <source>
    </source>
</evidence>
<evidence type="ECO:0000305" key="3"/>
<dbReference type="EMBL" id="Z75208">
    <property type="protein sequence ID" value="CAA99557.1"/>
    <property type="status" value="ALT_SEQ"/>
    <property type="molecule type" value="Genomic_DNA"/>
</dbReference>
<dbReference type="EMBL" id="AL009126">
    <property type="protein sequence ID" value="CAB14794.3"/>
    <property type="molecule type" value="Genomic_DNA"/>
</dbReference>
<dbReference type="PIR" id="G69986">
    <property type="entry name" value="G69986"/>
</dbReference>
<dbReference type="RefSeq" id="NP_390712.3">
    <property type="nucleotide sequence ID" value="NC_000964.3"/>
</dbReference>
<dbReference type="RefSeq" id="WP_003229586.1">
    <property type="nucleotide sequence ID" value="NZ_OZ025638.1"/>
</dbReference>
<dbReference type="FunCoup" id="P94560">
    <property type="interactions" value="46"/>
</dbReference>
<dbReference type="STRING" id="224308.BSU28340"/>
<dbReference type="PaxDb" id="224308-BSU28340"/>
<dbReference type="EnsemblBacteria" id="CAB14794">
    <property type="protein sequence ID" value="CAB14794"/>
    <property type="gene ID" value="BSU_28340"/>
</dbReference>
<dbReference type="GeneID" id="936228"/>
<dbReference type="KEGG" id="bsu:BSU28340"/>
<dbReference type="PATRIC" id="fig|224308.179.peg.3079"/>
<dbReference type="eggNOG" id="COG3861">
    <property type="taxonomic scope" value="Bacteria"/>
</dbReference>
<dbReference type="InParanoid" id="P94560"/>
<dbReference type="OrthoDB" id="2678178at2"/>
<dbReference type="BioCyc" id="BSUB:BSU28340-MONOMER"/>
<dbReference type="Proteomes" id="UP000001570">
    <property type="component" value="Chromosome"/>
</dbReference>
<dbReference type="InterPro" id="IPR019060">
    <property type="entry name" value="DUF2382"/>
</dbReference>
<dbReference type="InterPro" id="IPR025889">
    <property type="entry name" value="GSP17M-like_dom"/>
</dbReference>
<dbReference type="InterPro" id="IPR052967">
    <property type="entry name" value="Stress_Response_Assoc"/>
</dbReference>
<dbReference type="NCBIfam" id="TIGR02271">
    <property type="entry name" value="YsnF/AvaK domain"/>
    <property type="match status" value="1"/>
</dbReference>
<dbReference type="PANTHER" id="PTHR38463">
    <property type="entry name" value="STRESS RESPONSE PROTEIN YSNF"/>
    <property type="match status" value="1"/>
</dbReference>
<dbReference type="PANTHER" id="PTHR38463:SF1">
    <property type="entry name" value="STRESS RESPONSE PROTEIN YSNF"/>
    <property type="match status" value="1"/>
</dbReference>
<dbReference type="Pfam" id="PF09557">
    <property type="entry name" value="DUF2382"/>
    <property type="match status" value="1"/>
</dbReference>
<dbReference type="Pfam" id="PF11181">
    <property type="entry name" value="YflT"/>
    <property type="match status" value="1"/>
</dbReference>
<gene>
    <name type="primary">ysnF</name>
    <name type="ordered locus">BSU28340</name>
</gene>
<comment type="induction">
    <text evidence="2">By phosphate starvation, via the alternative sigma factor sigma-B.</text>
</comment>
<comment type="sequence caution" evidence="3">
    <conflict type="erroneous termination">
        <sequence resource="EMBL-CDS" id="CAA99557"/>
    </conflict>
    <text>Extended C-terminus.</text>
</comment>
<comment type="sequence caution" evidence="3">
    <conflict type="frameshift">
        <sequence resource="EMBL-CDS" id="CAA99557"/>
    </conflict>
</comment>
<sequence length="273" mass="30725">MKSIVGVYETPQETIAAIEGLLTKGYDSDDISVVTSRRDTDYLESRTGTEVNQAIDAHQDESESFFDKLKDYFTMDDTATHSKALSDLDIKTDEIDKYQEDLDDGKLLVAVDTDADVIAPIDNGNALSGGFSSTNELDYTTKEEKTMPLREEQLKVDKEDVQTGEVEIGKEVKTEKRDMDIPVRHDEIYVERRPVDENKTDAAPVNDSEEIRVPIVEEKLEVTKKPVVTDEVVVGKRTVEENEHISETVKKEEPRLNKEGKVDGLDDDPLNNK</sequence>
<organism>
    <name type="scientific">Bacillus subtilis (strain 168)</name>
    <dbReference type="NCBI Taxonomy" id="224308"/>
    <lineage>
        <taxon>Bacteria</taxon>
        <taxon>Bacillati</taxon>
        <taxon>Bacillota</taxon>
        <taxon>Bacilli</taxon>
        <taxon>Bacillales</taxon>
        <taxon>Bacillaceae</taxon>
        <taxon>Bacillus</taxon>
    </lineage>
</organism>
<protein>
    <recommendedName>
        <fullName>Stress response protein YsnF</fullName>
    </recommendedName>
</protein>
<accession>P94560</accession>
<keyword id="KW-1185">Reference proteome</keyword>
<keyword id="KW-0346">Stress response</keyword>
<proteinExistence type="evidence at transcript level"/>
<name>YSNF_BACSU</name>
<reference key="1">
    <citation type="journal article" date="1996" name="Microbiology">
        <title>The dnaB-pheA (256 degrees-240 degrees) region of the Bacillus subtilis chromosome containing genes responsible for stress responses, the utilization of plant cell walls and primary metabolism.</title>
        <authorList>
            <person name="Wipat A."/>
            <person name="Carter N."/>
            <person name="Brignell C.S."/>
            <person name="Guy J.B."/>
            <person name="Piper K."/>
            <person name="Sanders J."/>
            <person name="Emmerson P.T."/>
            <person name="Harwood C.R."/>
        </authorList>
    </citation>
    <scope>NUCLEOTIDE SEQUENCE [GENOMIC DNA]</scope>
    <source>
        <strain>168</strain>
    </source>
</reference>
<reference key="2">
    <citation type="journal article" date="1997" name="Nature">
        <title>The complete genome sequence of the Gram-positive bacterium Bacillus subtilis.</title>
        <authorList>
            <person name="Kunst F."/>
            <person name="Ogasawara N."/>
            <person name="Moszer I."/>
            <person name="Albertini A.M."/>
            <person name="Alloni G."/>
            <person name="Azevedo V."/>
            <person name="Bertero M.G."/>
            <person name="Bessieres P."/>
            <person name="Bolotin A."/>
            <person name="Borchert S."/>
            <person name="Borriss R."/>
            <person name="Boursier L."/>
            <person name="Brans A."/>
            <person name="Braun M."/>
            <person name="Brignell S.C."/>
            <person name="Bron S."/>
            <person name="Brouillet S."/>
            <person name="Bruschi C.V."/>
            <person name="Caldwell B."/>
            <person name="Capuano V."/>
            <person name="Carter N.M."/>
            <person name="Choi S.-K."/>
            <person name="Codani J.-J."/>
            <person name="Connerton I.F."/>
            <person name="Cummings N.J."/>
            <person name="Daniel R.A."/>
            <person name="Denizot F."/>
            <person name="Devine K.M."/>
            <person name="Duesterhoeft A."/>
            <person name="Ehrlich S.D."/>
            <person name="Emmerson P.T."/>
            <person name="Entian K.-D."/>
            <person name="Errington J."/>
            <person name="Fabret C."/>
            <person name="Ferrari E."/>
            <person name="Foulger D."/>
            <person name="Fritz C."/>
            <person name="Fujita M."/>
            <person name="Fujita Y."/>
            <person name="Fuma S."/>
            <person name="Galizzi A."/>
            <person name="Galleron N."/>
            <person name="Ghim S.-Y."/>
            <person name="Glaser P."/>
            <person name="Goffeau A."/>
            <person name="Golightly E.J."/>
            <person name="Grandi G."/>
            <person name="Guiseppi G."/>
            <person name="Guy B.J."/>
            <person name="Haga K."/>
            <person name="Haiech J."/>
            <person name="Harwood C.R."/>
            <person name="Henaut A."/>
            <person name="Hilbert H."/>
            <person name="Holsappel S."/>
            <person name="Hosono S."/>
            <person name="Hullo M.-F."/>
            <person name="Itaya M."/>
            <person name="Jones L.-M."/>
            <person name="Joris B."/>
            <person name="Karamata D."/>
            <person name="Kasahara Y."/>
            <person name="Klaerr-Blanchard M."/>
            <person name="Klein C."/>
            <person name="Kobayashi Y."/>
            <person name="Koetter P."/>
            <person name="Koningstein G."/>
            <person name="Krogh S."/>
            <person name="Kumano M."/>
            <person name="Kurita K."/>
            <person name="Lapidus A."/>
            <person name="Lardinois S."/>
            <person name="Lauber J."/>
            <person name="Lazarevic V."/>
            <person name="Lee S.-M."/>
            <person name="Levine A."/>
            <person name="Liu H."/>
            <person name="Masuda S."/>
            <person name="Mauel C."/>
            <person name="Medigue C."/>
            <person name="Medina N."/>
            <person name="Mellado R.P."/>
            <person name="Mizuno M."/>
            <person name="Moestl D."/>
            <person name="Nakai S."/>
            <person name="Noback M."/>
            <person name="Noone D."/>
            <person name="O'Reilly M."/>
            <person name="Ogawa K."/>
            <person name="Ogiwara A."/>
            <person name="Oudega B."/>
            <person name="Park S.-H."/>
            <person name="Parro V."/>
            <person name="Pohl T.M."/>
            <person name="Portetelle D."/>
            <person name="Porwollik S."/>
            <person name="Prescott A.M."/>
            <person name="Presecan E."/>
            <person name="Pujic P."/>
            <person name="Purnelle B."/>
            <person name="Rapoport G."/>
            <person name="Rey M."/>
            <person name="Reynolds S."/>
            <person name="Rieger M."/>
            <person name="Rivolta C."/>
            <person name="Rocha E."/>
            <person name="Roche B."/>
            <person name="Rose M."/>
            <person name="Sadaie Y."/>
            <person name="Sato T."/>
            <person name="Scanlan E."/>
            <person name="Schleich S."/>
            <person name="Schroeter R."/>
            <person name="Scoffone F."/>
            <person name="Sekiguchi J."/>
            <person name="Sekowska A."/>
            <person name="Seror S.J."/>
            <person name="Serror P."/>
            <person name="Shin B.-S."/>
            <person name="Soldo B."/>
            <person name="Sorokin A."/>
            <person name="Tacconi E."/>
            <person name="Takagi T."/>
            <person name="Takahashi H."/>
            <person name="Takemaru K."/>
            <person name="Takeuchi M."/>
            <person name="Tamakoshi A."/>
            <person name="Tanaka T."/>
            <person name="Terpstra P."/>
            <person name="Tognoni A."/>
            <person name="Tosato V."/>
            <person name="Uchiyama S."/>
            <person name="Vandenbol M."/>
            <person name="Vannier F."/>
            <person name="Vassarotti A."/>
            <person name="Viari A."/>
            <person name="Wambutt R."/>
            <person name="Wedler E."/>
            <person name="Wedler H."/>
            <person name="Weitzenegger T."/>
            <person name="Winters P."/>
            <person name="Wipat A."/>
            <person name="Yamamoto H."/>
            <person name="Yamane K."/>
            <person name="Yasumoto K."/>
            <person name="Yata K."/>
            <person name="Yoshida K."/>
            <person name="Yoshikawa H.-F."/>
            <person name="Zumstein E."/>
            <person name="Yoshikawa H."/>
            <person name="Danchin A."/>
        </authorList>
    </citation>
    <scope>NUCLEOTIDE SEQUENCE [LARGE SCALE GENOMIC DNA]</scope>
    <source>
        <strain>168</strain>
    </source>
</reference>
<reference key="3">
    <citation type="journal article" date="1999" name="Genome Res.">
        <title>Detecting and analyzing DNA sequencing errors: toward a higher quality of the Bacillus subtilis genome sequence.</title>
        <authorList>
            <person name="Medigue C."/>
            <person name="Rose M."/>
            <person name="Viari A."/>
            <person name="Danchin A."/>
        </authorList>
    </citation>
    <scope>SEQUENCE REVISION</scope>
</reference>
<reference key="4">
    <citation type="journal article" date="2009" name="Microbiology">
        <title>From a consortium sequence to a unified sequence: the Bacillus subtilis 168 reference genome a decade later.</title>
        <authorList>
            <person name="Barbe V."/>
            <person name="Cruveiller S."/>
            <person name="Kunst F."/>
            <person name="Lenoble P."/>
            <person name="Meurice G."/>
            <person name="Sekowska A."/>
            <person name="Vallenet D."/>
            <person name="Wang T."/>
            <person name="Moszer I."/>
            <person name="Medigue C."/>
            <person name="Danchin A."/>
        </authorList>
    </citation>
    <scope>SEQUENCE REVISION TO C-TERMINUS</scope>
</reference>
<reference key="5">
    <citation type="journal article" date="2002" name="Microbiology">
        <title>Regulatory interactions between the Pho and sigma(B)-dependent general stress regulons of Bacillus subtilis.</title>
        <authorList>
            <person name="Pragai Z."/>
            <person name="Harwood C.R."/>
        </authorList>
    </citation>
    <scope>TRANSCRIPTIONAL REGULATION</scope>
</reference>